<name>RIBA2_ORYSJ</name>
<evidence type="ECO:0000250" key="1"/>
<evidence type="ECO:0000255" key="2"/>
<evidence type="ECO:0000256" key="3">
    <source>
        <dbReference type="SAM" id="MobiDB-lite"/>
    </source>
</evidence>
<evidence type="ECO:0000305" key="4"/>
<sequence length="553" mass="59590">MASISPTSSSVAALRGHPVQFVKGGAVSKEAKGSISFSPVANSNNANVKFTGLRVAASLKRDGAFPGDGYSGNDNTVLPKSTSVRGQDYPTADSVLPTESIIVPEISNAGLKCVADMFSDEDKDTEQDLDSPTEGFSSISEAIKDIQQGKLVIVVDDESRENEGDLIMAASLVTPEAMAFVVRYGTGIVCVSMKEEDLERLNLPLMVATKENEEKLCTAFTVTVDAKEGTTTGVSAKDRAKTVMTLASPDSKPEDFNRPGHIFPLKYREGGVLKRAGHTEASVDLAMLAGLPPAAVLCEIVDEDGSMARLPKLRVFAERENLKIVSIADLIRYRRKRDRLVERSSVARLPLRWGNVRAYCYRSVIDGIEHIAMVKGEIGDGQGVLVRVHSECLTGDIFGSARCDCGDQLAMAMEMIEKAGRGVLVYLRGHEGRGIGLGHKLRAYNLQDDGRDTVEANEDLGLPVDSREYGIGAQILRDLGVRSMKLMTNNPAKYGGLKGYGLSIVGRVPLVTPITSENRRYLETKRTKMGHVYGLANGQASHQTGSNGAKGEH</sequence>
<protein>
    <recommendedName>
        <fullName>Probable bifunctional riboflavin biosynthesis protein RIBA 2, chloroplastic</fullName>
        <shortName>OsRIBA2</shortName>
    </recommendedName>
    <domain>
        <recommendedName>
            <fullName>3,4-dihydroxy-2-butanone 4-phosphate synthase</fullName>
            <shortName>DHBP synthase</shortName>
            <ecNumber>4.1.99.12</ecNumber>
        </recommendedName>
    </domain>
    <domain>
        <recommendedName>
            <fullName>GTP cyclohydrolase-2</fullName>
            <ecNumber>3.5.4.25</ecNumber>
        </recommendedName>
        <alternativeName>
            <fullName>GTP cyclohydrolase II</fullName>
        </alternativeName>
    </domain>
</protein>
<feature type="transit peptide" description="Chloroplast" evidence="2">
    <location>
        <begin position="1"/>
        <end position="56"/>
    </location>
</feature>
<feature type="chain" id="PRO_0000422711" description="Probable bifunctional riboflavin biosynthesis protein RIBA 2, chloroplastic">
    <location>
        <begin position="57"/>
        <end position="553"/>
    </location>
</feature>
<feature type="region of interest" description="DHBP synthase" evidence="1">
    <location>
        <begin position="62"/>
        <end position="336"/>
    </location>
</feature>
<feature type="region of interest" description="Disordered" evidence="3">
    <location>
        <begin position="70"/>
        <end position="90"/>
    </location>
</feature>
<feature type="region of interest" description="GTP cyclohydrolase II" evidence="1">
    <location>
        <begin position="337"/>
        <end position="553"/>
    </location>
</feature>
<feature type="compositionally biased region" description="Polar residues" evidence="3">
    <location>
        <begin position="72"/>
        <end position="85"/>
    </location>
</feature>
<feature type="active site" description="Proton acceptor; for GTP cyclohydrolase activity" evidence="2">
    <location>
        <position position="465"/>
    </location>
</feature>
<feature type="active site" description="Nucleophile; for GTP cyclohydrolase activity" evidence="1">
    <location>
        <position position="467"/>
    </location>
</feature>
<feature type="binding site" evidence="1">
    <location>
        <begin position="160"/>
        <end position="161"/>
    </location>
    <ligand>
        <name>D-ribulose 5-phosphate</name>
        <dbReference type="ChEBI" id="CHEBI:58121"/>
    </ligand>
</feature>
<feature type="binding site" evidence="1">
    <location>
        <position position="161"/>
    </location>
    <ligand>
        <name>Mg(2+)</name>
        <dbReference type="ChEBI" id="CHEBI:18420"/>
        <label>1</label>
    </ligand>
</feature>
<feature type="binding site" evidence="1">
    <location>
        <position position="161"/>
    </location>
    <ligand>
        <name>Mg(2+)</name>
        <dbReference type="ChEBI" id="CHEBI:18420"/>
        <label>2</label>
    </ligand>
</feature>
<feature type="binding site" evidence="1">
    <location>
        <position position="165"/>
    </location>
    <ligand>
        <name>D-ribulose 5-phosphate</name>
        <dbReference type="ChEBI" id="CHEBI:58121"/>
    </ligand>
</feature>
<feature type="binding site" evidence="1">
    <location>
        <begin position="275"/>
        <end position="279"/>
    </location>
    <ligand>
        <name>D-ribulose 5-phosphate</name>
        <dbReference type="ChEBI" id="CHEBI:58121"/>
    </ligand>
</feature>
<feature type="binding site" evidence="1">
    <location>
        <position position="278"/>
    </location>
    <ligand>
        <name>Mg(2+)</name>
        <dbReference type="ChEBI" id="CHEBI:18420"/>
        <label>2</label>
    </ligand>
</feature>
<feature type="binding site" evidence="1">
    <location>
        <position position="299"/>
    </location>
    <ligand>
        <name>D-ribulose 5-phosphate</name>
        <dbReference type="ChEBI" id="CHEBI:58121"/>
    </ligand>
</feature>
<feature type="binding site" evidence="1">
    <location>
        <begin position="387"/>
        <end position="391"/>
    </location>
    <ligand>
        <name>GTP</name>
        <dbReference type="ChEBI" id="CHEBI:37565"/>
    </ligand>
</feature>
<feature type="binding site" evidence="1">
    <location>
        <position position="392"/>
    </location>
    <ligand>
        <name>Zn(2+)</name>
        <dbReference type="ChEBI" id="CHEBI:29105"/>
        <note>catalytic</note>
    </ligand>
</feature>
<feature type="binding site" evidence="1">
    <location>
        <position position="403"/>
    </location>
    <ligand>
        <name>Zn(2+)</name>
        <dbReference type="ChEBI" id="CHEBI:29105"/>
        <note>catalytic</note>
    </ligand>
</feature>
<feature type="binding site" evidence="1">
    <location>
        <position position="405"/>
    </location>
    <ligand>
        <name>Zn(2+)</name>
        <dbReference type="ChEBI" id="CHEBI:29105"/>
        <note>catalytic</note>
    </ligand>
</feature>
<feature type="binding site" evidence="1">
    <location>
        <position position="408"/>
    </location>
    <ligand>
        <name>GTP</name>
        <dbReference type="ChEBI" id="CHEBI:37565"/>
    </ligand>
</feature>
<feature type="binding site" evidence="1">
    <location>
        <begin position="431"/>
        <end position="433"/>
    </location>
    <ligand>
        <name>GTP</name>
        <dbReference type="ChEBI" id="CHEBI:37565"/>
    </ligand>
</feature>
<feature type="binding site" evidence="1">
    <location>
        <position position="453"/>
    </location>
    <ligand>
        <name>GTP</name>
        <dbReference type="ChEBI" id="CHEBI:37565"/>
    </ligand>
</feature>
<feature type="binding site" evidence="1">
    <location>
        <position position="488"/>
    </location>
    <ligand>
        <name>GTP</name>
        <dbReference type="ChEBI" id="CHEBI:37565"/>
    </ligand>
</feature>
<feature type="binding site" evidence="1">
    <location>
        <position position="493"/>
    </location>
    <ligand>
        <name>GTP</name>
        <dbReference type="ChEBI" id="CHEBI:37565"/>
    </ligand>
</feature>
<feature type="site" description="Essential for DHBP synthase activity" evidence="1">
    <location>
        <position position="261"/>
    </location>
</feature>
<feature type="site" description="Essential for DHBP synthase activity" evidence="1">
    <location>
        <position position="299"/>
    </location>
</feature>
<proteinExistence type="evidence at transcript level"/>
<comment type="function">
    <text evidence="1">Involved in riboflavin biosynthesis. Catalyzes both the conversion of D-ribulose 5-phosphate to formate and 3,4-dihydroxy-2-butanone 4-phosphate and the conversion of GTP to 2,5-diamino-6-ribosylamino-4(3H)-pyrimidinone 5'-phosphate (DARP), formate and pyrophosphate (By similarity).</text>
</comment>
<comment type="catalytic activity">
    <reaction>
        <text>D-ribulose 5-phosphate = (2S)-2-hydroxy-3-oxobutyl phosphate + formate + H(+)</text>
        <dbReference type="Rhea" id="RHEA:18457"/>
        <dbReference type="ChEBI" id="CHEBI:15378"/>
        <dbReference type="ChEBI" id="CHEBI:15740"/>
        <dbReference type="ChEBI" id="CHEBI:58121"/>
        <dbReference type="ChEBI" id="CHEBI:58830"/>
        <dbReference type="EC" id="4.1.99.12"/>
    </reaction>
</comment>
<comment type="catalytic activity">
    <reaction>
        <text>GTP + 4 H2O = 2,5-diamino-6-hydroxy-4-(5-phosphoribosylamino)-pyrimidine + formate + 2 phosphate + 3 H(+)</text>
        <dbReference type="Rhea" id="RHEA:23704"/>
        <dbReference type="ChEBI" id="CHEBI:15377"/>
        <dbReference type="ChEBI" id="CHEBI:15378"/>
        <dbReference type="ChEBI" id="CHEBI:15740"/>
        <dbReference type="ChEBI" id="CHEBI:37565"/>
        <dbReference type="ChEBI" id="CHEBI:43474"/>
        <dbReference type="ChEBI" id="CHEBI:58614"/>
        <dbReference type="EC" id="3.5.4.25"/>
    </reaction>
</comment>
<comment type="cofactor">
    <cofactor evidence="1">
        <name>Mg(2+)</name>
        <dbReference type="ChEBI" id="CHEBI:18420"/>
    </cofactor>
    <cofactor evidence="1">
        <name>Mn(2+)</name>
        <dbReference type="ChEBI" id="CHEBI:29035"/>
    </cofactor>
    <text evidence="1">Binds 2 divalent metal cations per subunit. Magnesium or manganese.</text>
</comment>
<comment type="cofactor">
    <cofactor evidence="1">
        <name>Zn(2+)</name>
        <dbReference type="ChEBI" id="CHEBI:29105"/>
    </cofactor>
    <text evidence="1">Binds 1 zinc ion per subunit.</text>
</comment>
<comment type="pathway">
    <text>Cofactor biosynthesis; riboflavin biosynthesis; 2-hydroxy-3-oxobutyl phosphate from D-ribulose 5-phosphate: step 1/1.</text>
</comment>
<comment type="pathway">
    <text>Cofactor biosynthesis; riboflavin biosynthesis; 5-amino-6-(D-ribitylamino)uracil from GTP: step 1/4.</text>
</comment>
<comment type="subcellular location">
    <subcellularLocation>
        <location evidence="4">Plastid</location>
        <location evidence="4">Chloroplast</location>
    </subcellularLocation>
</comment>
<comment type="similarity">
    <text evidence="4">In the N-terminal section; belongs to the DHBP synthase family.</text>
</comment>
<comment type="similarity">
    <text evidence="4">In the C-terminal section; belongs to the GTP cyclohydrolase II family.</text>
</comment>
<organism>
    <name type="scientific">Oryza sativa subsp. japonica</name>
    <name type="common">Rice</name>
    <dbReference type="NCBI Taxonomy" id="39947"/>
    <lineage>
        <taxon>Eukaryota</taxon>
        <taxon>Viridiplantae</taxon>
        <taxon>Streptophyta</taxon>
        <taxon>Embryophyta</taxon>
        <taxon>Tracheophyta</taxon>
        <taxon>Spermatophyta</taxon>
        <taxon>Magnoliopsida</taxon>
        <taxon>Liliopsida</taxon>
        <taxon>Poales</taxon>
        <taxon>Poaceae</taxon>
        <taxon>BOP clade</taxon>
        <taxon>Oryzoideae</taxon>
        <taxon>Oryzeae</taxon>
        <taxon>Oryzinae</taxon>
        <taxon>Oryza</taxon>
        <taxon>Oryza sativa</taxon>
    </lineage>
</organism>
<accession>Q0E079</accession>
<accession>A0A0P0VKQ6</accession>
<keyword id="KW-0150">Chloroplast</keyword>
<keyword id="KW-0342">GTP-binding</keyword>
<keyword id="KW-0378">Hydrolase</keyword>
<keyword id="KW-0456">Lyase</keyword>
<keyword id="KW-0460">Magnesium</keyword>
<keyword id="KW-0464">Manganese</keyword>
<keyword id="KW-0479">Metal-binding</keyword>
<keyword id="KW-0511">Multifunctional enzyme</keyword>
<keyword id="KW-0547">Nucleotide-binding</keyword>
<keyword id="KW-0934">Plastid</keyword>
<keyword id="KW-1185">Reference proteome</keyword>
<keyword id="KW-0686">Riboflavin biosynthesis</keyword>
<keyword id="KW-0809">Transit peptide</keyword>
<keyword id="KW-0862">Zinc</keyword>
<reference key="1">
    <citation type="journal article" date="2005" name="Nature">
        <title>The map-based sequence of the rice genome.</title>
        <authorList>
            <consortium name="International rice genome sequencing project (IRGSP)"/>
        </authorList>
    </citation>
    <scope>NUCLEOTIDE SEQUENCE [LARGE SCALE GENOMIC DNA]</scope>
    <source>
        <strain>cv. Nipponbare</strain>
    </source>
</reference>
<reference key="2">
    <citation type="journal article" date="2008" name="Nucleic Acids Res.">
        <title>The rice annotation project database (RAP-DB): 2008 update.</title>
        <authorList>
            <consortium name="The rice annotation project (RAP)"/>
        </authorList>
    </citation>
    <scope>GENOME REANNOTATION</scope>
    <source>
        <strain>cv. Nipponbare</strain>
    </source>
</reference>
<reference key="3">
    <citation type="journal article" date="2013" name="Rice">
        <title>Improvement of the Oryza sativa Nipponbare reference genome using next generation sequence and optical map data.</title>
        <authorList>
            <person name="Kawahara Y."/>
            <person name="de la Bastide M."/>
            <person name="Hamilton J.P."/>
            <person name="Kanamori H."/>
            <person name="McCombie W.R."/>
            <person name="Ouyang S."/>
            <person name="Schwartz D.C."/>
            <person name="Tanaka T."/>
            <person name="Wu J."/>
            <person name="Zhou S."/>
            <person name="Childs K.L."/>
            <person name="Davidson R.M."/>
            <person name="Lin H."/>
            <person name="Quesada-Ocampo L."/>
            <person name="Vaillancourt B."/>
            <person name="Sakai H."/>
            <person name="Lee S.S."/>
            <person name="Kim J."/>
            <person name="Numa H."/>
            <person name="Itoh T."/>
            <person name="Buell C.R."/>
            <person name="Matsumoto T."/>
        </authorList>
    </citation>
    <scope>GENOME REANNOTATION</scope>
    <source>
        <strain>cv. Nipponbare</strain>
    </source>
</reference>
<reference key="4">
    <citation type="journal article" date="2005" name="PLoS Biol.">
        <title>The genomes of Oryza sativa: a history of duplications.</title>
        <authorList>
            <person name="Yu J."/>
            <person name="Wang J."/>
            <person name="Lin W."/>
            <person name="Li S."/>
            <person name="Li H."/>
            <person name="Zhou J."/>
            <person name="Ni P."/>
            <person name="Dong W."/>
            <person name="Hu S."/>
            <person name="Zeng C."/>
            <person name="Zhang J."/>
            <person name="Zhang Y."/>
            <person name="Li R."/>
            <person name="Xu Z."/>
            <person name="Li S."/>
            <person name="Li X."/>
            <person name="Zheng H."/>
            <person name="Cong L."/>
            <person name="Lin L."/>
            <person name="Yin J."/>
            <person name="Geng J."/>
            <person name="Li G."/>
            <person name="Shi J."/>
            <person name="Liu J."/>
            <person name="Lv H."/>
            <person name="Li J."/>
            <person name="Wang J."/>
            <person name="Deng Y."/>
            <person name="Ran L."/>
            <person name="Shi X."/>
            <person name="Wang X."/>
            <person name="Wu Q."/>
            <person name="Li C."/>
            <person name="Ren X."/>
            <person name="Wang J."/>
            <person name="Wang X."/>
            <person name="Li D."/>
            <person name="Liu D."/>
            <person name="Zhang X."/>
            <person name="Ji Z."/>
            <person name="Zhao W."/>
            <person name="Sun Y."/>
            <person name="Zhang Z."/>
            <person name="Bao J."/>
            <person name="Han Y."/>
            <person name="Dong L."/>
            <person name="Ji J."/>
            <person name="Chen P."/>
            <person name="Wu S."/>
            <person name="Liu J."/>
            <person name="Xiao Y."/>
            <person name="Bu D."/>
            <person name="Tan J."/>
            <person name="Yang L."/>
            <person name="Ye C."/>
            <person name="Zhang J."/>
            <person name="Xu J."/>
            <person name="Zhou Y."/>
            <person name="Yu Y."/>
            <person name="Zhang B."/>
            <person name="Zhuang S."/>
            <person name="Wei H."/>
            <person name="Liu B."/>
            <person name="Lei M."/>
            <person name="Yu H."/>
            <person name="Li Y."/>
            <person name="Xu H."/>
            <person name="Wei S."/>
            <person name="He X."/>
            <person name="Fang L."/>
            <person name="Zhang Z."/>
            <person name="Zhang Y."/>
            <person name="Huang X."/>
            <person name="Su Z."/>
            <person name="Tong W."/>
            <person name="Li J."/>
            <person name="Tong Z."/>
            <person name="Li S."/>
            <person name="Ye J."/>
            <person name="Wang L."/>
            <person name="Fang L."/>
            <person name="Lei T."/>
            <person name="Chen C.-S."/>
            <person name="Chen H.-C."/>
            <person name="Xu Z."/>
            <person name="Li H."/>
            <person name="Huang H."/>
            <person name="Zhang F."/>
            <person name="Xu H."/>
            <person name="Li N."/>
            <person name="Zhao C."/>
            <person name="Li S."/>
            <person name="Dong L."/>
            <person name="Huang Y."/>
            <person name="Li L."/>
            <person name="Xi Y."/>
            <person name="Qi Q."/>
            <person name="Li W."/>
            <person name="Zhang B."/>
            <person name="Hu W."/>
            <person name="Zhang Y."/>
            <person name="Tian X."/>
            <person name="Jiao Y."/>
            <person name="Liang X."/>
            <person name="Jin J."/>
            <person name="Gao L."/>
            <person name="Zheng W."/>
            <person name="Hao B."/>
            <person name="Liu S.-M."/>
            <person name="Wang W."/>
            <person name="Yuan L."/>
            <person name="Cao M."/>
            <person name="McDermott J."/>
            <person name="Samudrala R."/>
            <person name="Wang J."/>
            <person name="Wong G.K.-S."/>
            <person name="Yang H."/>
        </authorList>
    </citation>
    <scope>NUCLEOTIDE SEQUENCE [LARGE SCALE GENOMIC DNA]</scope>
    <source>
        <strain>cv. Nipponbare</strain>
    </source>
</reference>
<reference key="5">
    <citation type="journal article" date="2003" name="Science">
        <title>Collection, mapping, and annotation of over 28,000 cDNA clones from japonica rice.</title>
        <authorList>
            <consortium name="The rice full-length cDNA consortium"/>
        </authorList>
    </citation>
    <scope>NUCLEOTIDE SEQUENCE [LARGE SCALE MRNA]</scope>
    <source>
        <strain>cv. Nipponbare</strain>
    </source>
</reference>
<gene>
    <name type="primary">RIBA2</name>
    <name type="ordered locus">Os02g0572400</name>
    <name type="ORF">J023020F21</name>
    <name type="ORF">OsJ_07218</name>
</gene>
<dbReference type="EC" id="4.1.99.12"/>
<dbReference type="EC" id="3.5.4.25"/>
<dbReference type="EMBL" id="AP008208">
    <property type="protein sequence ID" value="BAF09109.1"/>
    <property type="molecule type" value="Genomic_DNA"/>
</dbReference>
<dbReference type="EMBL" id="AP014958">
    <property type="protein sequence ID" value="BAS79355.1"/>
    <property type="molecule type" value="Genomic_DNA"/>
</dbReference>
<dbReference type="EMBL" id="CM000139">
    <property type="protein sequence ID" value="EAZ23521.1"/>
    <property type="molecule type" value="Genomic_DNA"/>
</dbReference>
<dbReference type="EMBL" id="AK069475">
    <property type="protein sequence ID" value="BAG91454.1"/>
    <property type="molecule type" value="mRNA"/>
</dbReference>
<dbReference type="RefSeq" id="XP_015626297.1">
    <property type="nucleotide sequence ID" value="XM_015770811.1"/>
</dbReference>
<dbReference type="SMR" id="Q0E079"/>
<dbReference type="FunCoup" id="Q0E079">
    <property type="interactions" value="201"/>
</dbReference>
<dbReference type="STRING" id="39947.Q0E079"/>
<dbReference type="PaxDb" id="39947-Q0E079"/>
<dbReference type="EnsemblPlants" id="Os02t0572400-01">
    <property type="protein sequence ID" value="Os02t0572400-01"/>
    <property type="gene ID" value="Os02g0572400"/>
</dbReference>
<dbReference type="Gramene" id="Os02t0572400-01">
    <property type="protein sequence ID" value="Os02t0572400-01"/>
    <property type="gene ID" value="Os02g0572400"/>
</dbReference>
<dbReference type="KEGG" id="dosa:Os02g0572400"/>
<dbReference type="eggNOG" id="KOG1284">
    <property type="taxonomic scope" value="Eukaryota"/>
</dbReference>
<dbReference type="HOGENOM" id="CLU_020273_1_0_1"/>
<dbReference type="InParanoid" id="Q0E079"/>
<dbReference type="OMA" id="GGVHMAM"/>
<dbReference type="OrthoDB" id="60371at2759"/>
<dbReference type="PlantReactome" id="R-OSA-1119379">
    <property type="pathway name" value="Flavin biosynthesis"/>
</dbReference>
<dbReference type="UniPathway" id="UPA00275">
    <property type="reaction ID" value="UER00399"/>
</dbReference>
<dbReference type="UniPathway" id="UPA00275">
    <property type="reaction ID" value="UER00400"/>
</dbReference>
<dbReference type="Proteomes" id="UP000000763">
    <property type="component" value="Chromosome 2"/>
</dbReference>
<dbReference type="Proteomes" id="UP000007752">
    <property type="component" value="Chromosome 2"/>
</dbReference>
<dbReference type="Proteomes" id="UP000059680">
    <property type="component" value="Chromosome 2"/>
</dbReference>
<dbReference type="ExpressionAtlas" id="Q0E079">
    <property type="expression patterns" value="baseline and differential"/>
</dbReference>
<dbReference type="GO" id="GO:0009507">
    <property type="term" value="C:chloroplast"/>
    <property type="evidence" value="ECO:0000318"/>
    <property type="project" value="GO_Central"/>
</dbReference>
<dbReference type="GO" id="GO:0008686">
    <property type="term" value="F:3,4-dihydroxy-2-butanone-4-phosphate synthase activity"/>
    <property type="evidence" value="ECO:0000318"/>
    <property type="project" value="GO_Central"/>
</dbReference>
<dbReference type="GO" id="GO:0005525">
    <property type="term" value="F:GTP binding"/>
    <property type="evidence" value="ECO:0007669"/>
    <property type="project" value="UniProtKB-KW"/>
</dbReference>
<dbReference type="GO" id="GO:0003935">
    <property type="term" value="F:GTP cyclohydrolase II activity"/>
    <property type="evidence" value="ECO:0007669"/>
    <property type="project" value="UniProtKB-EC"/>
</dbReference>
<dbReference type="GO" id="GO:0046872">
    <property type="term" value="F:metal ion binding"/>
    <property type="evidence" value="ECO:0007669"/>
    <property type="project" value="UniProtKB-KW"/>
</dbReference>
<dbReference type="GO" id="GO:0009231">
    <property type="term" value="P:riboflavin biosynthetic process"/>
    <property type="evidence" value="ECO:0000318"/>
    <property type="project" value="GO_Central"/>
</dbReference>
<dbReference type="CDD" id="cd00641">
    <property type="entry name" value="GTP_cyclohydro2"/>
    <property type="match status" value="1"/>
</dbReference>
<dbReference type="FunFam" id="3.90.870.10:FF:000005">
    <property type="entry name" value="Bifunctional riboflavin biosynthesis protein RIBA 1 chloroplastic"/>
    <property type="match status" value="1"/>
</dbReference>
<dbReference type="FunFam" id="3.40.50.10990:FF:000001">
    <property type="entry name" value="Riboflavin biosynthesis protein RibBA"/>
    <property type="match status" value="1"/>
</dbReference>
<dbReference type="Gene3D" id="3.90.870.10">
    <property type="entry name" value="DHBP synthase"/>
    <property type="match status" value="1"/>
</dbReference>
<dbReference type="Gene3D" id="3.40.50.10990">
    <property type="entry name" value="GTP cyclohydrolase II"/>
    <property type="match status" value="1"/>
</dbReference>
<dbReference type="HAMAP" id="MF_00179">
    <property type="entry name" value="RibA"/>
    <property type="match status" value="1"/>
</dbReference>
<dbReference type="HAMAP" id="MF_00180">
    <property type="entry name" value="RibB"/>
    <property type="match status" value="1"/>
</dbReference>
<dbReference type="HAMAP" id="MF_01283">
    <property type="entry name" value="RibBA"/>
    <property type="match status" value="1"/>
</dbReference>
<dbReference type="InterPro" id="IPR017945">
    <property type="entry name" value="DHBP_synth_RibB-like_a/b_dom"/>
</dbReference>
<dbReference type="InterPro" id="IPR000422">
    <property type="entry name" value="DHBP_synthase_RibB"/>
</dbReference>
<dbReference type="InterPro" id="IPR032677">
    <property type="entry name" value="GTP_cyclohydro_II"/>
</dbReference>
<dbReference type="InterPro" id="IPR000926">
    <property type="entry name" value="RibA"/>
</dbReference>
<dbReference type="InterPro" id="IPR036144">
    <property type="entry name" value="RibA-like_sf"/>
</dbReference>
<dbReference type="InterPro" id="IPR016299">
    <property type="entry name" value="Riboflavin_synth_RibBA"/>
</dbReference>
<dbReference type="NCBIfam" id="NF001591">
    <property type="entry name" value="PRK00393.1"/>
    <property type="match status" value="1"/>
</dbReference>
<dbReference type="NCBIfam" id="NF006803">
    <property type="entry name" value="PRK09311.1"/>
    <property type="match status" value="1"/>
</dbReference>
<dbReference type="NCBIfam" id="TIGR00505">
    <property type="entry name" value="ribA"/>
    <property type="match status" value="1"/>
</dbReference>
<dbReference type="NCBIfam" id="TIGR00506">
    <property type="entry name" value="ribB"/>
    <property type="match status" value="1"/>
</dbReference>
<dbReference type="PANTHER" id="PTHR21327:SF18">
    <property type="entry name" value="3,4-DIHYDROXY-2-BUTANONE 4-PHOSPHATE SYNTHASE"/>
    <property type="match status" value="1"/>
</dbReference>
<dbReference type="PANTHER" id="PTHR21327">
    <property type="entry name" value="GTP CYCLOHYDROLASE II-RELATED"/>
    <property type="match status" value="1"/>
</dbReference>
<dbReference type="Pfam" id="PF00926">
    <property type="entry name" value="DHBP_synthase"/>
    <property type="match status" value="1"/>
</dbReference>
<dbReference type="Pfam" id="PF00925">
    <property type="entry name" value="GTP_cyclohydro2"/>
    <property type="match status" value="1"/>
</dbReference>
<dbReference type="SUPFAM" id="SSF142695">
    <property type="entry name" value="RibA-like"/>
    <property type="match status" value="1"/>
</dbReference>
<dbReference type="SUPFAM" id="SSF55821">
    <property type="entry name" value="YrdC/RibB"/>
    <property type="match status" value="1"/>
</dbReference>